<name>SDH6_ORYSJ</name>
<reference key="1">
    <citation type="journal article" date="2005" name="Nature">
        <title>The map-based sequence of the rice genome.</title>
        <authorList>
            <consortium name="International rice genome sequencing project (IRGSP)"/>
        </authorList>
    </citation>
    <scope>NUCLEOTIDE SEQUENCE [LARGE SCALE GENOMIC DNA]</scope>
    <source>
        <strain>cv. Nipponbare</strain>
    </source>
</reference>
<reference key="2">
    <citation type="journal article" date="2008" name="Nucleic Acids Res.">
        <title>The rice annotation project database (RAP-DB): 2008 update.</title>
        <authorList>
            <consortium name="The rice annotation project (RAP)"/>
        </authorList>
    </citation>
    <scope>GENOME REANNOTATION</scope>
    <source>
        <strain>cv. Nipponbare</strain>
    </source>
</reference>
<reference key="3">
    <citation type="journal article" date="2013" name="Rice">
        <title>Improvement of the Oryza sativa Nipponbare reference genome using next generation sequence and optical map data.</title>
        <authorList>
            <person name="Kawahara Y."/>
            <person name="de la Bastide M."/>
            <person name="Hamilton J.P."/>
            <person name="Kanamori H."/>
            <person name="McCombie W.R."/>
            <person name="Ouyang S."/>
            <person name="Schwartz D.C."/>
            <person name="Tanaka T."/>
            <person name="Wu J."/>
            <person name="Zhou S."/>
            <person name="Childs K.L."/>
            <person name="Davidson R.M."/>
            <person name="Lin H."/>
            <person name="Quesada-Ocampo L."/>
            <person name="Vaillancourt B."/>
            <person name="Sakai H."/>
            <person name="Lee S.S."/>
            <person name="Kim J."/>
            <person name="Numa H."/>
            <person name="Itoh T."/>
            <person name="Buell C.R."/>
            <person name="Matsumoto T."/>
        </authorList>
    </citation>
    <scope>GENOME REANNOTATION</scope>
    <source>
        <strain>cv. Nipponbare</strain>
    </source>
</reference>
<reference key="4">
    <citation type="journal article" date="2005" name="PLoS Biol.">
        <title>The genomes of Oryza sativa: a history of duplications.</title>
        <authorList>
            <person name="Yu J."/>
            <person name="Wang J."/>
            <person name="Lin W."/>
            <person name="Li S."/>
            <person name="Li H."/>
            <person name="Zhou J."/>
            <person name="Ni P."/>
            <person name="Dong W."/>
            <person name="Hu S."/>
            <person name="Zeng C."/>
            <person name="Zhang J."/>
            <person name="Zhang Y."/>
            <person name="Li R."/>
            <person name="Xu Z."/>
            <person name="Li S."/>
            <person name="Li X."/>
            <person name="Zheng H."/>
            <person name="Cong L."/>
            <person name="Lin L."/>
            <person name="Yin J."/>
            <person name="Geng J."/>
            <person name="Li G."/>
            <person name="Shi J."/>
            <person name="Liu J."/>
            <person name="Lv H."/>
            <person name="Li J."/>
            <person name="Wang J."/>
            <person name="Deng Y."/>
            <person name="Ran L."/>
            <person name="Shi X."/>
            <person name="Wang X."/>
            <person name="Wu Q."/>
            <person name="Li C."/>
            <person name="Ren X."/>
            <person name="Wang J."/>
            <person name="Wang X."/>
            <person name="Li D."/>
            <person name="Liu D."/>
            <person name="Zhang X."/>
            <person name="Ji Z."/>
            <person name="Zhao W."/>
            <person name="Sun Y."/>
            <person name="Zhang Z."/>
            <person name="Bao J."/>
            <person name="Han Y."/>
            <person name="Dong L."/>
            <person name="Ji J."/>
            <person name="Chen P."/>
            <person name="Wu S."/>
            <person name="Liu J."/>
            <person name="Xiao Y."/>
            <person name="Bu D."/>
            <person name="Tan J."/>
            <person name="Yang L."/>
            <person name="Ye C."/>
            <person name="Zhang J."/>
            <person name="Xu J."/>
            <person name="Zhou Y."/>
            <person name="Yu Y."/>
            <person name="Zhang B."/>
            <person name="Zhuang S."/>
            <person name="Wei H."/>
            <person name="Liu B."/>
            <person name="Lei M."/>
            <person name="Yu H."/>
            <person name="Li Y."/>
            <person name="Xu H."/>
            <person name="Wei S."/>
            <person name="He X."/>
            <person name="Fang L."/>
            <person name="Zhang Z."/>
            <person name="Zhang Y."/>
            <person name="Huang X."/>
            <person name="Su Z."/>
            <person name="Tong W."/>
            <person name="Li J."/>
            <person name="Tong Z."/>
            <person name="Li S."/>
            <person name="Ye J."/>
            <person name="Wang L."/>
            <person name="Fang L."/>
            <person name="Lei T."/>
            <person name="Chen C.-S."/>
            <person name="Chen H.-C."/>
            <person name="Xu Z."/>
            <person name="Li H."/>
            <person name="Huang H."/>
            <person name="Zhang F."/>
            <person name="Xu H."/>
            <person name="Li N."/>
            <person name="Zhao C."/>
            <person name="Li S."/>
            <person name="Dong L."/>
            <person name="Huang Y."/>
            <person name="Li L."/>
            <person name="Xi Y."/>
            <person name="Qi Q."/>
            <person name="Li W."/>
            <person name="Zhang B."/>
            <person name="Hu W."/>
            <person name="Zhang Y."/>
            <person name="Tian X."/>
            <person name="Jiao Y."/>
            <person name="Liang X."/>
            <person name="Jin J."/>
            <person name="Gao L."/>
            <person name="Zheng W."/>
            <person name="Hao B."/>
            <person name="Liu S.-M."/>
            <person name="Wang W."/>
            <person name="Yuan L."/>
            <person name="Cao M."/>
            <person name="McDermott J."/>
            <person name="Samudrala R."/>
            <person name="Wang J."/>
            <person name="Wong G.K.-S."/>
            <person name="Yang H."/>
        </authorList>
    </citation>
    <scope>NUCLEOTIDE SEQUENCE [LARGE SCALE GENOMIC DNA]</scope>
    <source>
        <strain>cv. Nipponbare</strain>
    </source>
</reference>
<reference key="5">
    <citation type="journal article" date="2003" name="Science">
        <title>Collection, mapping, and annotation of over 28,000 cDNA clones from japonica rice.</title>
        <authorList>
            <consortium name="The rice full-length cDNA consortium"/>
        </authorList>
    </citation>
    <scope>NUCLEOTIDE SEQUENCE [LARGE SCALE MRNA]</scope>
    <source>
        <strain>cv. Nipponbare</strain>
    </source>
</reference>
<reference key="6">
    <citation type="journal article" date="2010" name="Plant Mol. Biol.">
        <title>Functional and composition differences between mitochondrial complex II in Arabidopsis and rice are correlated with the complex genetic history of the enzyme.</title>
        <authorList>
            <person name="Huang S."/>
            <person name="Taylor N.L."/>
            <person name="Narsai R."/>
            <person name="Eubel H."/>
            <person name="Whelan J."/>
            <person name="Millar A.H."/>
        </authorList>
    </citation>
    <scope>IDENTIFICATION BY MASS SPECTROMETRY</scope>
    <scope>SUBUNIT</scope>
</reference>
<sequence length="142" mass="15728">MGIHEHVEGIKAHWAKNFSFLDYFKKVYGRDKPLPKWTDADVDEFIASDPVYGPQLKAMRESRKFALGGALVGGAHLGGIALKYSKAPHGVVLATGFGAICGAVVGSEVAEHWYQLYKTDKQGANLRFIYWWEDKVAGNQKS</sequence>
<accession>Q6ZCC4</accession>
<accession>A0A0P0XB41</accession>
<gene>
    <name evidence="2" type="primary">SDH6</name>
    <name evidence="4" type="ordered locus">Os08g0112800</name>
    <name evidence="2" type="ordered locus">LOC_Os08g02080</name>
    <name evidence="5" type="ORF">OsJ_25800</name>
    <name evidence="3" type="ORF">P0498H04.25</name>
</gene>
<organism>
    <name type="scientific">Oryza sativa subsp. japonica</name>
    <name type="common">Rice</name>
    <dbReference type="NCBI Taxonomy" id="39947"/>
    <lineage>
        <taxon>Eukaryota</taxon>
        <taxon>Viridiplantae</taxon>
        <taxon>Streptophyta</taxon>
        <taxon>Embryophyta</taxon>
        <taxon>Tracheophyta</taxon>
        <taxon>Spermatophyta</taxon>
        <taxon>Magnoliopsida</taxon>
        <taxon>Liliopsida</taxon>
        <taxon>Poales</taxon>
        <taxon>Poaceae</taxon>
        <taxon>BOP clade</taxon>
        <taxon>Oryzoideae</taxon>
        <taxon>Oryzeae</taxon>
        <taxon>Oryzinae</taxon>
        <taxon>Oryza</taxon>
        <taxon>Oryza sativa</taxon>
    </lineage>
</organism>
<evidence type="ECO:0000269" key="1">
    <source>
    </source>
</evidence>
<evidence type="ECO:0000305" key="2"/>
<evidence type="ECO:0000312" key="3">
    <source>
        <dbReference type="EMBL" id="BAD09512.1"/>
    </source>
</evidence>
<evidence type="ECO:0000312" key="4">
    <source>
        <dbReference type="EMBL" id="BAF22748.1"/>
    </source>
</evidence>
<evidence type="ECO:0000312" key="5">
    <source>
        <dbReference type="EMBL" id="EAZ41292.1"/>
    </source>
</evidence>
<keyword id="KW-0472">Membrane</keyword>
<keyword id="KW-0496">Mitochondrion</keyword>
<keyword id="KW-0999">Mitochondrion inner membrane</keyword>
<keyword id="KW-1185">Reference proteome</keyword>
<keyword id="KW-0816">Tricarboxylic acid cycle</keyword>
<feature type="chain" id="PRO_0000431753" description="Succinate dehydrogenase subunit 6, mitochondrial">
    <location>
        <begin position="1"/>
        <end position="142"/>
    </location>
</feature>
<dbReference type="EMBL" id="AP004566">
    <property type="protein sequence ID" value="BAD09512.1"/>
    <property type="molecule type" value="Genomic_DNA"/>
</dbReference>
<dbReference type="EMBL" id="AP008214">
    <property type="protein sequence ID" value="BAF22748.1"/>
    <property type="molecule type" value="Genomic_DNA"/>
</dbReference>
<dbReference type="EMBL" id="AP014964">
    <property type="protein sequence ID" value="BAT03520.1"/>
    <property type="molecule type" value="Genomic_DNA"/>
</dbReference>
<dbReference type="EMBL" id="CM000145">
    <property type="protein sequence ID" value="EAZ41292.1"/>
    <property type="molecule type" value="Genomic_DNA"/>
</dbReference>
<dbReference type="EMBL" id="AK121176">
    <property type="protein sequence ID" value="BAH00351.1"/>
    <property type="molecule type" value="mRNA"/>
</dbReference>
<dbReference type="RefSeq" id="XP_015650792.1">
    <property type="nucleotide sequence ID" value="XM_015795306.1"/>
</dbReference>
<dbReference type="FunCoup" id="Q6ZCC4">
    <property type="interactions" value="2809"/>
</dbReference>
<dbReference type="STRING" id="39947.Q6ZCC4"/>
<dbReference type="PaxDb" id="39947-Q6ZCC4"/>
<dbReference type="EnsemblPlants" id="Os08t0112800-01">
    <property type="protein sequence ID" value="Os08t0112800-01"/>
    <property type="gene ID" value="Os08g0112800"/>
</dbReference>
<dbReference type="Gramene" id="Os08t0112800-01">
    <property type="protein sequence ID" value="Os08t0112800-01"/>
    <property type="gene ID" value="Os08g0112800"/>
</dbReference>
<dbReference type="KEGG" id="dosa:Os08g0112800"/>
<dbReference type="eggNOG" id="ENOG502RZ7U">
    <property type="taxonomic scope" value="Eukaryota"/>
</dbReference>
<dbReference type="HOGENOM" id="CLU_116953_0_0_1"/>
<dbReference type="InParanoid" id="Q6ZCC4"/>
<dbReference type="OMA" id="FMEWWEK"/>
<dbReference type="OrthoDB" id="2012862at2759"/>
<dbReference type="UniPathway" id="UPA00223"/>
<dbReference type="Proteomes" id="UP000000763">
    <property type="component" value="Chromosome 8"/>
</dbReference>
<dbReference type="Proteomes" id="UP000007752">
    <property type="component" value="Chromosome 8"/>
</dbReference>
<dbReference type="Proteomes" id="UP000059680">
    <property type="component" value="Chromosome 8"/>
</dbReference>
<dbReference type="GO" id="GO:0005743">
    <property type="term" value="C:mitochondrial inner membrane"/>
    <property type="evidence" value="ECO:0007669"/>
    <property type="project" value="UniProtKB-SubCell"/>
</dbReference>
<dbReference type="GO" id="GO:0019867">
    <property type="term" value="C:outer membrane"/>
    <property type="evidence" value="ECO:0007669"/>
    <property type="project" value="InterPro"/>
</dbReference>
<dbReference type="GO" id="GO:0045273">
    <property type="term" value="C:respiratory chain complex II (succinate dehydrogenase)"/>
    <property type="evidence" value="ECO:0000314"/>
    <property type="project" value="UniProtKB"/>
</dbReference>
<dbReference type="GO" id="GO:0006099">
    <property type="term" value="P:tricarboxylic acid cycle"/>
    <property type="evidence" value="ECO:0007669"/>
    <property type="project" value="UniProtKB-UniPathway"/>
</dbReference>
<dbReference type="InterPro" id="IPR008816">
    <property type="entry name" value="Gly_zipper_2TM_dom"/>
</dbReference>
<dbReference type="InterPro" id="IPR034574">
    <property type="entry name" value="SDH6"/>
</dbReference>
<dbReference type="PANTHER" id="PTHR36708">
    <property type="entry name" value="SUCCINATE DEHYDROGENASE SUBUNIT 6, MITOCHONDRIAL"/>
    <property type="match status" value="1"/>
</dbReference>
<dbReference type="PANTHER" id="PTHR36708:SF1">
    <property type="entry name" value="SUCCINATE DEHYDROGENASE SUBUNIT 6, MITOCHONDRIAL"/>
    <property type="match status" value="1"/>
</dbReference>
<dbReference type="Pfam" id="PF05433">
    <property type="entry name" value="Rick_17kDa_Anti"/>
    <property type="match status" value="1"/>
</dbReference>
<comment type="pathway">
    <text evidence="2">Carbohydrate metabolism; tricarboxylic acid cycle.</text>
</comment>
<comment type="subunit">
    <text evidence="1">Component of complex II composed of eight subunits in plants: four classical SDH subunits SDH1, SDH2, SDH3 and SDH4 (a flavoprotein (FP), an iron-sulfur protein (IP), and a cytochrome b composed of a large and a small subunit.), as well as four subunits unknown in mitochondria from bacteria and heterotrophic eukaryotes.</text>
</comment>
<comment type="subcellular location">
    <subcellularLocation>
        <location evidence="2">Mitochondrion inner membrane</location>
        <topology evidence="2">Peripheral membrane protein</topology>
    </subcellularLocation>
</comment>
<protein>
    <recommendedName>
        <fullName evidence="2">Succinate dehydrogenase subunit 6, mitochondrial</fullName>
    </recommendedName>
</protein>
<proteinExistence type="evidence at protein level"/>